<dbReference type="EMBL" id="BC088516">
    <property type="protein sequence ID" value="AAH88516.1"/>
    <property type="molecule type" value="mRNA"/>
</dbReference>
<dbReference type="RefSeq" id="NP_001011353.1">
    <property type="nucleotide sequence ID" value="NM_001011353.1"/>
</dbReference>
<dbReference type="SMR" id="Q5M7Q1"/>
<dbReference type="FunCoup" id="Q5M7Q1">
    <property type="interactions" value="2260"/>
</dbReference>
<dbReference type="STRING" id="8364.ENSXETP00000028031"/>
<dbReference type="PaxDb" id="8364-ENSXETP00000012652"/>
<dbReference type="DNASU" id="496819"/>
<dbReference type="GeneID" id="496819"/>
<dbReference type="KEGG" id="xtr:496819"/>
<dbReference type="AGR" id="Xenbase:XB-GENE-1003590"/>
<dbReference type="CTD" id="201163"/>
<dbReference type="Xenbase" id="XB-GENE-1003590">
    <property type="gene designation" value="flcn"/>
</dbReference>
<dbReference type="eggNOG" id="KOG3715">
    <property type="taxonomic scope" value="Eukaryota"/>
</dbReference>
<dbReference type="HOGENOM" id="CLU_035854_2_0_1"/>
<dbReference type="InParanoid" id="Q5M7Q1"/>
<dbReference type="OMA" id="LWASLHC"/>
<dbReference type="OrthoDB" id="5599713at2759"/>
<dbReference type="PhylomeDB" id="Q5M7Q1"/>
<dbReference type="TreeFam" id="TF315084"/>
<dbReference type="Reactome" id="R-XTR-9639288">
    <property type="pathway name" value="Amino acids regulate mTORC1"/>
</dbReference>
<dbReference type="Proteomes" id="UP000008143">
    <property type="component" value="Chromosome 9"/>
</dbReference>
<dbReference type="Bgee" id="ENSXETG00000005745">
    <property type="expression patterns" value="Expressed in skeletal muscle tissue and 13 other cell types or tissues"/>
</dbReference>
<dbReference type="GO" id="GO:0005813">
    <property type="term" value="C:centrosome"/>
    <property type="evidence" value="ECO:0000250"/>
    <property type="project" value="UniProtKB"/>
</dbReference>
<dbReference type="GO" id="GO:0005929">
    <property type="term" value="C:cilium"/>
    <property type="evidence" value="ECO:0000250"/>
    <property type="project" value="UniProtKB"/>
</dbReference>
<dbReference type="GO" id="GO:0005737">
    <property type="term" value="C:cytoplasm"/>
    <property type="evidence" value="ECO:0000250"/>
    <property type="project" value="UniProtKB"/>
</dbReference>
<dbReference type="GO" id="GO:0005829">
    <property type="term" value="C:cytosol"/>
    <property type="evidence" value="ECO:0000250"/>
    <property type="project" value="UniProtKB"/>
</dbReference>
<dbReference type="GO" id="GO:1990877">
    <property type="term" value="C:FNIP-folliculin RagC/D GAP"/>
    <property type="evidence" value="ECO:0000250"/>
    <property type="project" value="UniProtKB"/>
</dbReference>
<dbReference type="GO" id="GO:0005765">
    <property type="term" value="C:lysosomal membrane"/>
    <property type="evidence" value="ECO:0000250"/>
    <property type="project" value="UniProtKB"/>
</dbReference>
<dbReference type="GO" id="GO:0072686">
    <property type="term" value="C:mitotic spindle"/>
    <property type="evidence" value="ECO:0000250"/>
    <property type="project" value="UniProtKB"/>
</dbReference>
<dbReference type="GO" id="GO:0005634">
    <property type="term" value="C:nucleus"/>
    <property type="evidence" value="ECO:0000250"/>
    <property type="project" value="UniProtKB"/>
</dbReference>
<dbReference type="GO" id="GO:0005886">
    <property type="term" value="C:plasma membrane"/>
    <property type="evidence" value="ECO:0000250"/>
    <property type="project" value="UniProtKB"/>
</dbReference>
<dbReference type="GO" id="GO:0005096">
    <property type="term" value="F:GTPase activator activity"/>
    <property type="evidence" value="ECO:0000250"/>
    <property type="project" value="UniProtKB"/>
</dbReference>
<dbReference type="GO" id="GO:0044877">
    <property type="term" value="F:protein-containing complex binding"/>
    <property type="evidence" value="ECO:0000250"/>
    <property type="project" value="UniProtKB"/>
</dbReference>
<dbReference type="GO" id="GO:0007043">
    <property type="term" value="P:cell-cell junction assembly"/>
    <property type="evidence" value="ECO:0000250"/>
    <property type="project" value="UniProtKB"/>
</dbReference>
<dbReference type="GO" id="GO:0034198">
    <property type="term" value="P:cellular response to amino acid starvation"/>
    <property type="evidence" value="ECO:0000250"/>
    <property type="project" value="UniProtKB"/>
</dbReference>
<dbReference type="GO" id="GO:0009267">
    <property type="term" value="P:cellular response to starvation"/>
    <property type="evidence" value="ECO:0000250"/>
    <property type="project" value="UniProtKB"/>
</dbReference>
<dbReference type="GO" id="GO:0097009">
    <property type="term" value="P:energy homeostasis"/>
    <property type="evidence" value="ECO:0000250"/>
    <property type="project" value="UniProtKB"/>
</dbReference>
<dbReference type="GO" id="GO:0030097">
    <property type="term" value="P:hemopoiesis"/>
    <property type="evidence" value="ECO:0000250"/>
    <property type="project" value="UniProtKB"/>
</dbReference>
<dbReference type="GO" id="GO:0035556">
    <property type="term" value="P:intracellular signal transduction"/>
    <property type="evidence" value="ECO:0000250"/>
    <property type="project" value="UniProtKB"/>
</dbReference>
<dbReference type="GO" id="GO:0032418">
    <property type="term" value="P:lysosome localization"/>
    <property type="evidence" value="ECO:0000250"/>
    <property type="project" value="UniProtKB"/>
</dbReference>
<dbReference type="GO" id="GO:1903444">
    <property type="term" value="P:negative regulation of brown fat cell differentiation"/>
    <property type="evidence" value="ECO:0000250"/>
    <property type="project" value="UniProtKB"/>
</dbReference>
<dbReference type="GO" id="GO:1901723">
    <property type="term" value="P:negative regulation of cell proliferation involved in kidney development"/>
    <property type="evidence" value="ECO:0000250"/>
    <property type="project" value="UniProtKB"/>
</dbReference>
<dbReference type="GO" id="GO:0070373">
    <property type="term" value="P:negative regulation of ERK1 and ERK2 cascade"/>
    <property type="evidence" value="ECO:0000250"/>
    <property type="project" value="UniProtKB"/>
</dbReference>
<dbReference type="GO" id="GO:0051898">
    <property type="term" value="P:negative regulation of phosphatidylinositol 3-kinase/protein kinase B signal transduction"/>
    <property type="evidence" value="ECO:0000250"/>
    <property type="project" value="UniProtKB"/>
</dbReference>
<dbReference type="GO" id="GO:0035024">
    <property type="term" value="P:negative regulation of Rho protein signal transduction"/>
    <property type="evidence" value="ECO:0000250"/>
    <property type="project" value="UniProtKB"/>
</dbReference>
<dbReference type="GO" id="GO:0032007">
    <property type="term" value="P:negative regulation of TOR signaling"/>
    <property type="evidence" value="ECO:0000250"/>
    <property type="project" value="UniProtKB"/>
</dbReference>
<dbReference type="GO" id="GO:0000122">
    <property type="term" value="P:negative regulation of transcription by RNA polymerase II"/>
    <property type="evidence" value="ECO:0000250"/>
    <property type="project" value="UniProtKB"/>
</dbReference>
<dbReference type="GO" id="GO:0043065">
    <property type="term" value="P:positive regulation of apoptotic process"/>
    <property type="evidence" value="ECO:0000250"/>
    <property type="project" value="UniProtKB"/>
</dbReference>
<dbReference type="GO" id="GO:0010508">
    <property type="term" value="P:positive regulation of autophagy"/>
    <property type="evidence" value="ECO:0000250"/>
    <property type="project" value="UniProtKB"/>
</dbReference>
<dbReference type="GO" id="GO:0032008">
    <property type="term" value="P:positive regulation of TOR signaling"/>
    <property type="evidence" value="ECO:0000250"/>
    <property type="project" value="UniProtKB"/>
</dbReference>
<dbReference type="GO" id="GO:1904263">
    <property type="term" value="P:positive regulation of TORC1 signaling"/>
    <property type="evidence" value="ECO:0000250"/>
    <property type="project" value="UniProtKB"/>
</dbReference>
<dbReference type="GO" id="GO:0030511">
    <property type="term" value="P:positive regulation of transforming growth factor beta receptor signaling pathway"/>
    <property type="evidence" value="ECO:0000250"/>
    <property type="project" value="UniProtKB"/>
</dbReference>
<dbReference type="GO" id="GO:2000973">
    <property type="term" value="P:regulation of pro-B cell differentiation"/>
    <property type="evidence" value="ECO:0000250"/>
    <property type="project" value="UniProtKB"/>
</dbReference>
<dbReference type="GO" id="GO:0046578">
    <property type="term" value="P:regulation of Ras protein signal transduction"/>
    <property type="evidence" value="ECO:0000250"/>
    <property type="project" value="UniProtKB"/>
</dbReference>
<dbReference type="GO" id="GO:0032006">
    <property type="term" value="P:regulation of TOR signaling"/>
    <property type="evidence" value="ECO:0000250"/>
    <property type="project" value="UniProtKB"/>
</dbReference>
<dbReference type="FunFam" id="3.40.50.12430:FF:000001">
    <property type="entry name" value="Folliculin"/>
    <property type="match status" value="1"/>
</dbReference>
<dbReference type="Gene3D" id="3.40.50.12430">
    <property type="match status" value="1"/>
</dbReference>
<dbReference type="Gene3D" id="1.10.10.1730">
    <property type="entry name" value="Folliculin"/>
    <property type="match status" value="1"/>
</dbReference>
<dbReference type="InterPro" id="IPR037521">
    <property type="entry name" value="FLCN/SMCR8_DENN"/>
</dbReference>
<dbReference type="InterPro" id="IPR044886">
    <property type="entry name" value="FLCN_DENN_C_sf"/>
</dbReference>
<dbReference type="InterPro" id="IPR021713">
    <property type="entry name" value="Folliculin"/>
</dbReference>
<dbReference type="InterPro" id="IPR037520">
    <property type="entry name" value="Folliculin/SMCR8_longin"/>
</dbReference>
<dbReference type="InterPro" id="IPR032035">
    <property type="entry name" value="Folliculin_DENN"/>
</dbReference>
<dbReference type="PANTHER" id="PTHR31441:SF2">
    <property type="entry name" value="FOLLICULIN"/>
    <property type="match status" value="1"/>
</dbReference>
<dbReference type="PANTHER" id="PTHR31441">
    <property type="entry name" value="FOLLICULIN FAMILY MEMBER"/>
    <property type="match status" value="1"/>
</dbReference>
<dbReference type="Pfam" id="PF11704">
    <property type="entry name" value="Folliculin"/>
    <property type="match status" value="1"/>
</dbReference>
<dbReference type="Pfam" id="PF16692">
    <property type="entry name" value="Folliculin_C"/>
    <property type="match status" value="1"/>
</dbReference>
<dbReference type="PROSITE" id="PS51834">
    <property type="entry name" value="DENN_FLCN_SMCR8"/>
    <property type="match status" value="1"/>
</dbReference>
<gene>
    <name evidence="1" type="primary">flcn</name>
</gene>
<evidence type="ECO:0000250" key="1">
    <source>
        <dbReference type="UniProtKB" id="Q8NFG4"/>
    </source>
</evidence>
<evidence type="ECO:0000250" key="2">
    <source>
        <dbReference type="UniProtKB" id="Q8QZS3"/>
    </source>
</evidence>
<evidence type="ECO:0000255" key="3">
    <source>
        <dbReference type="PROSITE-ProRule" id="PRU01178"/>
    </source>
</evidence>
<evidence type="ECO:0000256" key="4">
    <source>
        <dbReference type="SAM" id="MobiDB-lite"/>
    </source>
</evidence>
<evidence type="ECO:0000305" key="5"/>
<sequence length="579" mass="65018">MNAIVALCHFCELHGPRTLFCTEALHSPHPQGASCGDSIGQGEQAEDEEMGIQMSSRIRCHSPAEGASADSNSPRPKKSDMCEGCRSLAAGHPGYISHDKETSIKYVSHQHPNHPQLFSIVRQACVRSLSCEVCPGREGPIFFGDEQHGFVFSHTFFIKDSLARGFQRWYSIIVIMMDRIYLINSWPFLLAKIRGVIDELQGKALKVFEAEQFGCPQRPLRINTAFTPFLHQRNGNAARSLTSLTSDDNLWACLHTSFAWLLKACGCRLTEKLLEGAPTEDTLVQMEKQADLEEECAAREVADGEEGRPRLQPELMEGRELSKCPTESSVLSDCSWNMVQRRMGVFRSLRHMRQVLGASAFRMLAWHVLMGNQVIWKGQDQELIQSAFDVLQAMLPVGCVRVIPYSEKYEDAYRCNFLGLSPQAEIPLHVQSSEFSVMVDVRHANRSNLYPALFVDDEPLSKYEFVVASGSPVTIDKVGLTILNKIEAALSNENLSMDVVDQCLICLKEEWMNKVKVLFKFTKVDSRPKEDTQKLLGILGASEEDNIKLLKFWMTGLSKTYKSHLMSSVRSPTASECRN</sequence>
<feature type="chain" id="PRO_0000223943" description="Folliculin">
    <location>
        <begin position="1"/>
        <end position="579"/>
    </location>
</feature>
<feature type="domain" description="uDENN FLCN/SMCR8-type" evidence="3">
    <location>
        <begin position="86"/>
        <end position="242"/>
    </location>
</feature>
<feature type="domain" description="cDENN FLCN/SMCR8-type" evidence="3">
    <location>
        <begin position="337"/>
        <end position="491"/>
    </location>
</feature>
<feature type="domain" description="dDENN FLCN/SMCR8-type" evidence="3">
    <location>
        <begin position="493"/>
        <end position="558"/>
    </location>
</feature>
<feature type="region of interest" description="Disordered" evidence="4">
    <location>
        <begin position="32"/>
        <end position="52"/>
    </location>
</feature>
<feature type="site" description="Essential for GTPase activation (GAP) activity" evidence="1">
    <location>
        <position position="164"/>
    </location>
</feature>
<comment type="function">
    <text evidence="1 2">Multi-functional protein, involved in both the cellular response to amino acid availability and in the regulation of glycolysis. GTPase-activating protein that plays a key role in the cellular response to amino acid availability through regulation of the non-canonical mTORC1 signaling cascade controlling the MiT/TFE factors tfeb and tfe3. Activates mTORC1 by acting as a GTPase-activating protein: specifically stimulates GTP hydrolysis by RagC/RRAGC or RagD/RRAGD, promoting the conversion to the GDP-bound state of RagC/RRAGC or RagD/RRAGD, and thereby activating the kinase activity of mTORC1. The GTPase-activating activity is inhibited during starvation and activated in presence of nutrients. Acts as a key component for non-canonical mTORC1-dependent control of the MiT/TFE factors tfeb and tfe3, while it is not involved in mTORC1-dependent phosphorylation of canonical RPS6KB1/S6K1 and EIF4EBP1/4E-BP1. In low-amino acid conditions, the lysosomal folliculin complex (LFC) is formed on the membrane of lysosomes, which inhibits the GTPase-activating activity of flcn, inactivates mTORC1 and maximizes nuclear translocation of tfeb and tfe3. Upon amino acid restimulation, RagA/RRAGA (or RagB/RRAGB) nucleotide exchange promotes disassembly of the LFC complex and liberates the GTPase-activating activity of flcn, leading to activation of mTORC1 and subsequent cytoplasmic retention of tfeb and tfe3. Required for the exit of hematopoietic stem cell from pluripotency by promoting mTOR-dependent cytoplasmic retention of tfe3, thereby increasing Wnt signaling. Acts as an inhibitor of browning of adipose tissue by regulating mTOR-dependent cytoplasmic retention of tfe3. In response to flow stress, regulates STK11/LKB1 accumulation and mTORC1 activation through primary cilia. Required for starvation-induced perinuclear clustering of lysosomes by promoting association of rilp with its effector rab34. Involved in the control of embryonic stem cells differentiation; together with lamtor1 it is necessary to recruit and activate RagC/RRAGC and RagD/RRAGD at the lysosomes, and to induce exit of embryonic stem cells from pluripotency via non-canonical, mTOR-independent tfe3 inactivation. Regulates glycolysis by binding to lactate dehydrogenase ldha, acting as an uncompetitive inhibitor.</text>
</comment>
<comment type="activity regulation">
    <text evidence="1">GTPase-activating activity is inhibited in the folliculin complex (LFC), which stabilizes the GDP-bound state of RagA/RRAGA (or RagB/RRAGB), because Arg-164 is located far from the RagC/RRAGC or RagD/RRAGD nucleotide pocket. Disassembly of the LFC complex upon amino acid restimulation liberates the GTPase-activating activity.</text>
</comment>
<comment type="subunit">
    <text evidence="1">Component of the lysosomal folliculin complex (LFC).</text>
</comment>
<comment type="subcellular location">
    <subcellularLocation>
        <location evidence="1">Lysosome membrane</location>
    </subcellularLocation>
    <subcellularLocation>
        <location evidence="1">Cytoplasm</location>
        <location evidence="1">Cytosol</location>
    </subcellularLocation>
    <subcellularLocation>
        <location evidence="1">Cell projection</location>
        <location evidence="1">Cilium</location>
    </subcellularLocation>
    <subcellularLocation>
        <location evidence="1">Cytoplasm</location>
        <location evidence="1">Cytoskeleton</location>
        <location evidence="1">Microtubule organizing center</location>
        <location evidence="1">Centrosome</location>
    </subcellularLocation>
    <subcellularLocation>
        <location evidence="1">Cytoplasm</location>
        <location evidence="1">Cytoskeleton</location>
        <location evidence="1">Spindle</location>
    </subcellularLocation>
    <subcellularLocation>
        <location evidence="1">Nucleus</location>
    </subcellularLocation>
    <text evidence="1">Localizes to lysosome membrane in amino acid-depleted conditions and relocalizes to the cytosol upon refeeding. Also localizes to motile and non-motile cilia, centrosomes and the mitotic spindle.</text>
</comment>
<comment type="similarity">
    <text evidence="5">Belongs to the folliculin family.</text>
</comment>
<proteinExistence type="evidence at transcript level"/>
<reference key="1">
    <citation type="submission" date="2004-12" db="EMBL/GenBank/DDBJ databases">
        <authorList>
            <consortium name="NIH - Xenopus Gene Collection (XGC) project"/>
        </authorList>
    </citation>
    <scope>NUCLEOTIDE SEQUENCE [LARGE SCALE MRNA]</scope>
    <source>
        <tissue>Embryo</tissue>
    </source>
</reference>
<name>FLCN_XENTR</name>
<accession>Q5M7Q1</accession>
<keyword id="KW-0966">Cell projection</keyword>
<keyword id="KW-0963">Cytoplasm</keyword>
<keyword id="KW-0206">Cytoskeleton</keyword>
<keyword id="KW-0343">GTPase activation</keyword>
<keyword id="KW-0458">Lysosome</keyword>
<keyword id="KW-0472">Membrane</keyword>
<keyword id="KW-0539">Nucleus</keyword>
<keyword id="KW-1185">Reference proteome</keyword>
<organism>
    <name type="scientific">Xenopus tropicalis</name>
    <name type="common">Western clawed frog</name>
    <name type="synonym">Silurana tropicalis</name>
    <dbReference type="NCBI Taxonomy" id="8364"/>
    <lineage>
        <taxon>Eukaryota</taxon>
        <taxon>Metazoa</taxon>
        <taxon>Chordata</taxon>
        <taxon>Craniata</taxon>
        <taxon>Vertebrata</taxon>
        <taxon>Euteleostomi</taxon>
        <taxon>Amphibia</taxon>
        <taxon>Batrachia</taxon>
        <taxon>Anura</taxon>
        <taxon>Pipoidea</taxon>
        <taxon>Pipidae</taxon>
        <taxon>Xenopodinae</taxon>
        <taxon>Xenopus</taxon>
        <taxon>Silurana</taxon>
    </lineage>
</organism>
<protein>
    <recommendedName>
        <fullName evidence="1">Folliculin</fullName>
    </recommendedName>
</protein>